<sequence>MIIKNLQEFYRLLIPNTQLIAIDYGSKKLGIAMSNGERSIAMPLNTITVVNKTAVINSVLSIIAKYKICGVVIGLPIDMSGVVTQQTNIVMKFAEELAKYTNLPIYLQDERLTTKAANNFLKSFGVKRKDRNNNDDAVAASMILETVLDSIKRY</sequence>
<reference key="1">
    <citation type="submission" date="2007-09" db="EMBL/GenBank/DDBJ databases">
        <title>Complete genome sequence of Rickettsia canadensis.</title>
        <authorList>
            <person name="Madan A."/>
            <person name="Fahey J."/>
            <person name="Helton E."/>
            <person name="Ketteman M."/>
            <person name="Madan A."/>
            <person name="Rodrigues S."/>
            <person name="Sanchez A."/>
            <person name="Whiting M."/>
            <person name="Dasch G."/>
            <person name="Eremeeva M."/>
        </authorList>
    </citation>
    <scope>NUCLEOTIDE SEQUENCE [LARGE SCALE GENOMIC DNA]</scope>
    <source>
        <strain>McKiel</strain>
    </source>
</reference>
<feature type="chain" id="PRO_1000061563" description="Putative pre-16S rRNA nuclease">
    <location>
        <begin position="1"/>
        <end position="154"/>
    </location>
</feature>
<protein>
    <recommendedName>
        <fullName evidence="1">Putative pre-16S rRNA nuclease</fullName>
        <ecNumber evidence="1">3.1.-.-</ecNumber>
    </recommendedName>
</protein>
<comment type="function">
    <text evidence="1">Could be a nuclease involved in processing of the 5'-end of pre-16S rRNA.</text>
</comment>
<comment type="subcellular location">
    <subcellularLocation>
        <location evidence="1">Cytoplasm</location>
    </subcellularLocation>
</comment>
<comment type="similarity">
    <text evidence="1">Belongs to the YqgF nuclease family.</text>
</comment>
<evidence type="ECO:0000255" key="1">
    <source>
        <dbReference type="HAMAP-Rule" id="MF_00651"/>
    </source>
</evidence>
<gene>
    <name type="ordered locus">A1E_03830</name>
</gene>
<keyword id="KW-0963">Cytoplasm</keyword>
<keyword id="KW-0378">Hydrolase</keyword>
<keyword id="KW-0540">Nuclease</keyword>
<keyword id="KW-0690">Ribosome biogenesis</keyword>
<dbReference type="EC" id="3.1.-.-" evidence="1"/>
<dbReference type="EMBL" id="CP000409">
    <property type="protein sequence ID" value="ABV73695.1"/>
    <property type="molecule type" value="Genomic_DNA"/>
</dbReference>
<dbReference type="RefSeq" id="WP_012148890.1">
    <property type="nucleotide sequence ID" value="NC_009879.1"/>
</dbReference>
<dbReference type="SMR" id="A8EZB2"/>
<dbReference type="STRING" id="293613.A1E_03830"/>
<dbReference type="KEGG" id="rcm:A1E_03830"/>
<dbReference type="eggNOG" id="COG0816">
    <property type="taxonomic scope" value="Bacteria"/>
</dbReference>
<dbReference type="HOGENOM" id="CLU_098240_2_2_5"/>
<dbReference type="Proteomes" id="UP000007056">
    <property type="component" value="Chromosome"/>
</dbReference>
<dbReference type="GO" id="GO:0005829">
    <property type="term" value="C:cytosol"/>
    <property type="evidence" value="ECO:0007669"/>
    <property type="project" value="TreeGrafter"/>
</dbReference>
<dbReference type="GO" id="GO:0004518">
    <property type="term" value="F:nuclease activity"/>
    <property type="evidence" value="ECO:0007669"/>
    <property type="project" value="UniProtKB-KW"/>
</dbReference>
<dbReference type="GO" id="GO:0000967">
    <property type="term" value="P:rRNA 5'-end processing"/>
    <property type="evidence" value="ECO:0007669"/>
    <property type="project" value="UniProtKB-UniRule"/>
</dbReference>
<dbReference type="CDD" id="cd16964">
    <property type="entry name" value="YqgF"/>
    <property type="match status" value="1"/>
</dbReference>
<dbReference type="Gene3D" id="3.30.420.140">
    <property type="entry name" value="YqgF/RNase H-like domain"/>
    <property type="match status" value="1"/>
</dbReference>
<dbReference type="HAMAP" id="MF_00651">
    <property type="entry name" value="Nuclease_YqgF"/>
    <property type="match status" value="1"/>
</dbReference>
<dbReference type="InterPro" id="IPR012337">
    <property type="entry name" value="RNaseH-like_sf"/>
</dbReference>
<dbReference type="InterPro" id="IPR005227">
    <property type="entry name" value="YqgF"/>
</dbReference>
<dbReference type="InterPro" id="IPR006641">
    <property type="entry name" value="YqgF/RNaseH-like_dom"/>
</dbReference>
<dbReference type="InterPro" id="IPR037027">
    <property type="entry name" value="YqgF/RNaseH-like_dom_sf"/>
</dbReference>
<dbReference type="NCBIfam" id="TIGR00250">
    <property type="entry name" value="RNAse_H_YqgF"/>
    <property type="match status" value="1"/>
</dbReference>
<dbReference type="PANTHER" id="PTHR33317">
    <property type="entry name" value="POLYNUCLEOTIDYL TRANSFERASE, RIBONUCLEASE H-LIKE SUPERFAMILY PROTEIN"/>
    <property type="match status" value="1"/>
</dbReference>
<dbReference type="PANTHER" id="PTHR33317:SF4">
    <property type="entry name" value="POLYNUCLEOTIDYL TRANSFERASE, RIBONUCLEASE H-LIKE SUPERFAMILY PROTEIN"/>
    <property type="match status" value="1"/>
</dbReference>
<dbReference type="Pfam" id="PF03652">
    <property type="entry name" value="RuvX"/>
    <property type="match status" value="1"/>
</dbReference>
<dbReference type="SMART" id="SM00732">
    <property type="entry name" value="YqgFc"/>
    <property type="match status" value="1"/>
</dbReference>
<dbReference type="SUPFAM" id="SSF53098">
    <property type="entry name" value="Ribonuclease H-like"/>
    <property type="match status" value="1"/>
</dbReference>
<accession>A8EZB2</accession>
<proteinExistence type="inferred from homology"/>
<organism>
    <name type="scientific">Rickettsia canadensis (strain McKiel)</name>
    <dbReference type="NCBI Taxonomy" id="293613"/>
    <lineage>
        <taxon>Bacteria</taxon>
        <taxon>Pseudomonadati</taxon>
        <taxon>Pseudomonadota</taxon>
        <taxon>Alphaproteobacteria</taxon>
        <taxon>Rickettsiales</taxon>
        <taxon>Rickettsiaceae</taxon>
        <taxon>Rickettsieae</taxon>
        <taxon>Rickettsia</taxon>
        <taxon>belli group</taxon>
    </lineage>
</organism>
<name>YQGF_RICCK</name>